<reference key="1">
    <citation type="journal article" date="2005" name="Nature">
        <title>The genome of the social amoeba Dictyostelium discoideum.</title>
        <authorList>
            <person name="Eichinger L."/>
            <person name="Pachebat J.A."/>
            <person name="Gloeckner G."/>
            <person name="Rajandream M.A."/>
            <person name="Sucgang R."/>
            <person name="Berriman M."/>
            <person name="Song J."/>
            <person name="Olsen R."/>
            <person name="Szafranski K."/>
            <person name="Xu Q."/>
            <person name="Tunggal B."/>
            <person name="Kummerfeld S."/>
            <person name="Madera M."/>
            <person name="Konfortov B.A."/>
            <person name="Rivero F."/>
            <person name="Bankier A.T."/>
            <person name="Lehmann R."/>
            <person name="Hamlin N."/>
            <person name="Davies R."/>
            <person name="Gaudet P."/>
            <person name="Fey P."/>
            <person name="Pilcher K."/>
            <person name="Chen G."/>
            <person name="Saunders D."/>
            <person name="Sodergren E.J."/>
            <person name="Davis P."/>
            <person name="Kerhornou A."/>
            <person name="Nie X."/>
            <person name="Hall N."/>
            <person name="Anjard C."/>
            <person name="Hemphill L."/>
            <person name="Bason N."/>
            <person name="Farbrother P."/>
            <person name="Desany B."/>
            <person name="Just E."/>
            <person name="Morio T."/>
            <person name="Rost R."/>
            <person name="Churcher C.M."/>
            <person name="Cooper J."/>
            <person name="Haydock S."/>
            <person name="van Driessche N."/>
            <person name="Cronin A."/>
            <person name="Goodhead I."/>
            <person name="Muzny D.M."/>
            <person name="Mourier T."/>
            <person name="Pain A."/>
            <person name="Lu M."/>
            <person name="Harper D."/>
            <person name="Lindsay R."/>
            <person name="Hauser H."/>
            <person name="James K.D."/>
            <person name="Quiles M."/>
            <person name="Madan Babu M."/>
            <person name="Saito T."/>
            <person name="Buchrieser C."/>
            <person name="Wardroper A."/>
            <person name="Felder M."/>
            <person name="Thangavelu M."/>
            <person name="Johnson D."/>
            <person name="Knights A."/>
            <person name="Loulseged H."/>
            <person name="Mungall K.L."/>
            <person name="Oliver K."/>
            <person name="Price C."/>
            <person name="Quail M.A."/>
            <person name="Urushihara H."/>
            <person name="Hernandez J."/>
            <person name="Rabbinowitsch E."/>
            <person name="Steffen D."/>
            <person name="Sanders M."/>
            <person name="Ma J."/>
            <person name="Kohara Y."/>
            <person name="Sharp S."/>
            <person name="Simmonds M.N."/>
            <person name="Spiegler S."/>
            <person name="Tivey A."/>
            <person name="Sugano S."/>
            <person name="White B."/>
            <person name="Walker D."/>
            <person name="Woodward J.R."/>
            <person name="Winckler T."/>
            <person name="Tanaka Y."/>
            <person name="Shaulsky G."/>
            <person name="Schleicher M."/>
            <person name="Weinstock G.M."/>
            <person name="Rosenthal A."/>
            <person name="Cox E.C."/>
            <person name="Chisholm R.L."/>
            <person name="Gibbs R.A."/>
            <person name="Loomis W.F."/>
            <person name="Platzer M."/>
            <person name="Kay R.R."/>
            <person name="Williams J.G."/>
            <person name="Dear P.H."/>
            <person name="Noegel A.A."/>
            <person name="Barrell B.G."/>
            <person name="Kuspa A."/>
        </authorList>
    </citation>
    <scope>NUCLEOTIDE SEQUENCE [LARGE SCALE GENOMIC DNA]</scope>
    <source>
        <strain>AX4</strain>
    </source>
</reference>
<reference key="2">
    <citation type="journal article" date="2004" name="BMC Dev. Biol.">
        <title>Gdt2 regulates the transition of Dictyostelium cells from growth to differentiation.</title>
        <authorList>
            <person name="Chibalina M.V."/>
            <person name="Anjard C."/>
            <person name="Insall R.H."/>
        </authorList>
    </citation>
    <scope>IDENTIFICATION</scope>
    <scope>NOMENCLATURE</scope>
</reference>
<name>GDT4_DICDI</name>
<protein>
    <recommendedName>
        <fullName>Probable serine/threonine-protein kinase gdt4</fullName>
        <ecNumber>2.7.11.1</ecNumber>
    </recommendedName>
    <alternativeName>
        <fullName>Growth-differentiation transition protein 4</fullName>
    </alternativeName>
</protein>
<sequence>MKLEQRIFFLICLVINSFSNCSLLVAPDGYYNIYRENKIENILNLKPNGNKSQDSYYPDVCSKAVKNKEGVKSFILSSFPLSTKEYANVIVTKGSHMTLGDGEYHQIFNINRFLNIVCVEGSLVFSTKDVVYMSALVILPGGNFECIDCTIKFRDLYPTNSLIDPFGFLPGIITLGGSLSLLGKQKTVYSAVLIDENILEVQDISSLDIFNGYSLFIFSESFPLGKASTFTFNSNQIKVLEIKIPKTDKSIRVFFYSRFSTFSTSTTASIHITGNSNVHIENFYIDSFGRTTNDQYSDTELIFSQDDPNLITGFINGSNQRFRSSLYIEHSNNVTIKNSVILENRGETRSPLIFFGSNVNISGNIISSKSGSSLIAQYGTENIQSTNNYYSLSLPLLKSLNSTLDSMDYGNEGNGIFSISPKINSINDIFNGQIIAINHIILSDRSSITGFDKDCYSPCYNDSIRVSSKVQHSVEFKITGSTFISSSNYSESSFLFRISETGSKQSSFYKIINSNLSYPISVLLENNAFILDNVYGFGNFTINGLIKRLDIINSTLDPSVTSSISLSNFSKAISIQNSFMDYRSFQKQNNQIYGSIITPYLYYFENTMNLIKVSKMYPNVNHQILAGTVLNMGIEIIIIAPLFGKMDCIFEDESGIQTIPFNKSSNSCVLPYLFKNEGSFNVRVTLSLTKSLDNIIFQVYFPMVTVFNIYSFYSGWAMIDSNIEKEIIIDGNIFKKGCQQQVLGNCTISTNSKLITGLPSVTESDKLNRLFSSGITSINPYEPVTITIPIDKESKKNQIQLFFTHQPIDIETSLLSIYVENQPIFLLEPLQSNLDSTFKNLTFHYENSKSLEKIKITFITRGDIYLTSTAIYSSTNQPIYNEVIGINEQLNILAIVLPITISLFAAASILAGYLVIKKYKKPNMYYNRNTNGNIGMKVFSTKFKRRPKKVIPLSIPLSTNRITKKSLQSLDSMAENPVILLSIPELEKANEPEFNPEKTFLQESELLDLPTPKVEPEEPRINIVPLPRFPTVYKKEDNDKLLKELNITGPITSENIESFFEVDVGLPSLIIKNESEIILQEIDYIETGEIQEMEGSFLEDKSTDTTVIVTKSDGLPKFFQTKVFSKRFNDISKFDNDFFDLKEYIVEHQEESFEIPFMTSEDEVDETKINIIDFLLSPKSNKVALNMYLKSFQNRNHKLCYGKYGSNKNSILVIEGTSYYYDCTDVRLPISTPRSNLNFGITDGNKCIVDRKYRERLQYINVYSEPFRIYTLFPDSNDNVTITTSECCKEIDPFGSLDVDIFVTLKTTTKFNEKVTIRYETDDKELAFSTFVYLNLESQVSSKIDFDEIVLEKYLSEGSFGVVYSAIWRSSSVAVKLFKHHYSKDEIDKETSILSKIKHPNIVSFIGSLNFLNTYGIVIDYHPRGSLNYYTRNQNIKLSMVQNIRISLDISRACSFLHKNGIIHRDLKPDNVLIVSFDPDSSICAKISDFGTCREINGKHELNSKAGTTRYMSPEILEGLPYTYSTDVYSFAILFFELLSGRVPFREIPKREIPRFVRLGTRPRLDQDVFADNDISLILLACWNPNPRGRPTFDTLIDLLEKLLKKYKERAKRNKKNQNQ</sequence>
<proteinExistence type="inferred from homology"/>
<organism>
    <name type="scientific">Dictyostelium discoideum</name>
    <name type="common">Social amoeba</name>
    <dbReference type="NCBI Taxonomy" id="44689"/>
    <lineage>
        <taxon>Eukaryota</taxon>
        <taxon>Amoebozoa</taxon>
        <taxon>Evosea</taxon>
        <taxon>Eumycetozoa</taxon>
        <taxon>Dictyostelia</taxon>
        <taxon>Dictyosteliales</taxon>
        <taxon>Dictyosteliaceae</taxon>
        <taxon>Dictyostelium</taxon>
    </lineage>
</organism>
<evidence type="ECO:0000255" key="1"/>
<evidence type="ECO:0000255" key="2">
    <source>
        <dbReference type="PROSITE-ProRule" id="PRU00159"/>
    </source>
</evidence>
<evidence type="ECO:0000255" key="3">
    <source>
        <dbReference type="PROSITE-ProRule" id="PRU10027"/>
    </source>
</evidence>
<evidence type="ECO:0000305" key="4"/>
<feature type="signal peptide" evidence="1">
    <location>
        <begin position="1"/>
        <end position="19"/>
    </location>
</feature>
<feature type="chain" id="PRO_0000323581" description="Probable serine/threonine-protein kinase gdt4">
    <location>
        <begin position="20"/>
        <end position="1620"/>
    </location>
</feature>
<feature type="topological domain" description="Extracellular" evidence="1">
    <location>
        <begin position="20"/>
        <end position="891"/>
    </location>
</feature>
<feature type="transmembrane region" description="Helical" evidence="1">
    <location>
        <begin position="892"/>
        <end position="912"/>
    </location>
</feature>
<feature type="topological domain" description="Cytoplasmic" evidence="1">
    <location>
        <begin position="913"/>
        <end position="1620"/>
    </location>
</feature>
<feature type="domain" description="Protein kinase" evidence="2">
    <location>
        <begin position="1349"/>
        <end position="1604"/>
    </location>
</feature>
<feature type="active site" description="Proton acceptor" evidence="2 3">
    <location>
        <position position="1466"/>
    </location>
</feature>
<feature type="binding site" evidence="2">
    <location>
        <begin position="1355"/>
        <end position="1363"/>
    </location>
    <ligand>
        <name>ATP</name>
        <dbReference type="ChEBI" id="CHEBI:30616"/>
    </ligand>
</feature>
<feature type="binding site" evidence="2">
    <location>
        <position position="1376"/>
    </location>
    <ligand>
        <name>ATP</name>
        <dbReference type="ChEBI" id="CHEBI:30616"/>
    </ligand>
</feature>
<comment type="catalytic activity">
    <reaction>
        <text>L-seryl-[protein] + ATP = O-phospho-L-seryl-[protein] + ADP + H(+)</text>
        <dbReference type="Rhea" id="RHEA:17989"/>
        <dbReference type="Rhea" id="RHEA-COMP:9863"/>
        <dbReference type="Rhea" id="RHEA-COMP:11604"/>
        <dbReference type="ChEBI" id="CHEBI:15378"/>
        <dbReference type="ChEBI" id="CHEBI:29999"/>
        <dbReference type="ChEBI" id="CHEBI:30616"/>
        <dbReference type="ChEBI" id="CHEBI:83421"/>
        <dbReference type="ChEBI" id="CHEBI:456216"/>
        <dbReference type="EC" id="2.7.11.1"/>
    </reaction>
</comment>
<comment type="catalytic activity">
    <reaction>
        <text>L-threonyl-[protein] + ATP = O-phospho-L-threonyl-[protein] + ADP + H(+)</text>
        <dbReference type="Rhea" id="RHEA:46608"/>
        <dbReference type="Rhea" id="RHEA-COMP:11060"/>
        <dbReference type="Rhea" id="RHEA-COMP:11605"/>
        <dbReference type="ChEBI" id="CHEBI:15378"/>
        <dbReference type="ChEBI" id="CHEBI:30013"/>
        <dbReference type="ChEBI" id="CHEBI:30616"/>
        <dbReference type="ChEBI" id="CHEBI:61977"/>
        <dbReference type="ChEBI" id="CHEBI:456216"/>
        <dbReference type="EC" id="2.7.11.1"/>
    </reaction>
</comment>
<comment type="subcellular location">
    <subcellularLocation>
        <location evidence="4">Membrane</location>
        <topology evidence="4">Single-pass type I membrane protein</topology>
    </subcellularLocation>
</comment>
<comment type="similarity">
    <text evidence="4">In the N-terminal section; belongs to the GDT family.</text>
</comment>
<comment type="similarity">
    <text evidence="4">In the C-terminal section; belongs to the protein kinase superfamily. TKL Ser/Thr protein kinase family.</text>
</comment>
<dbReference type="EC" id="2.7.11.1"/>
<dbReference type="EMBL" id="AAFI02000005">
    <property type="protein sequence ID" value="EAL72625.2"/>
    <property type="molecule type" value="Genomic_DNA"/>
</dbReference>
<dbReference type="RefSeq" id="XP_646034.2">
    <property type="nucleotide sequence ID" value="XM_640942.2"/>
</dbReference>
<dbReference type="SMR" id="Q55DU7"/>
<dbReference type="FunCoup" id="Q55DU7">
    <property type="interactions" value="141"/>
</dbReference>
<dbReference type="PaxDb" id="44689-DDB0220632"/>
<dbReference type="EnsemblProtists" id="EAL72625">
    <property type="protein sequence ID" value="EAL72625"/>
    <property type="gene ID" value="DDB_G0270550"/>
</dbReference>
<dbReference type="GeneID" id="8616981"/>
<dbReference type="KEGG" id="ddi:DDB_G0270550"/>
<dbReference type="dictyBase" id="DDB_G0270550">
    <property type="gene designation" value="gdt4"/>
</dbReference>
<dbReference type="VEuPathDB" id="AmoebaDB:DDB_G0270550"/>
<dbReference type="eggNOG" id="KOG0192">
    <property type="taxonomic scope" value="Eukaryota"/>
</dbReference>
<dbReference type="HOGENOM" id="CLU_251247_0_0_1"/>
<dbReference type="InParanoid" id="Q55DU7"/>
<dbReference type="OMA" id="SSICAKI"/>
<dbReference type="PhylomeDB" id="Q55DU7"/>
<dbReference type="PRO" id="PR:Q55DU7"/>
<dbReference type="Proteomes" id="UP000002195">
    <property type="component" value="Chromosome 1"/>
</dbReference>
<dbReference type="GO" id="GO:0016020">
    <property type="term" value="C:membrane"/>
    <property type="evidence" value="ECO:0007669"/>
    <property type="project" value="UniProtKB-SubCell"/>
</dbReference>
<dbReference type="GO" id="GO:0005524">
    <property type="term" value="F:ATP binding"/>
    <property type="evidence" value="ECO:0007669"/>
    <property type="project" value="UniProtKB-KW"/>
</dbReference>
<dbReference type="GO" id="GO:0106310">
    <property type="term" value="F:protein serine kinase activity"/>
    <property type="evidence" value="ECO:0007669"/>
    <property type="project" value="RHEA"/>
</dbReference>
<dbReference type="GO" id="GO:0004674">
    <property type="term" value="F:protein serine/threonine kinase activity"/>
    <property type="evidence" value="ECO:0007669"/>
    <property type="project" value="UniProtKB-KW"/>
</dbReference>
<dbReference type="GO" id="GO:0050793">
    <property type="term" value="P:regulation of developmental process"/>
    <property type="evidence" value="ECO:0000318"/>
    <property type="project" value="GO_Central"/>
</dbReference>
<dbReference type="CDD" id="cd13999">
    <property type="entry name" value="STKc_MAP3K-like"/>
    <property type="match status" value="1"/>
</dbReference>
<dbReference type="Gene3D" id="3.30.200.20">
    <property type="entry name" value="Phosphorylase Kinase, domain 1"/>
    <property type="match status" value="1"/>
</dbReference>
<dbReference type="Gene3D" id="1.10.510.10">
    <property type="entry name" value="Transferase(Phosphotransferase) domain 1"/>
    <property type="match status" value="1"/>
</dbReference>
<dbReference type="InterPro" id="IPR052015">
    <property type="entry name" value="GDT_regulator"/>
</dbReference>
<dbReference type="InterPro" id="IPR011009">
    <property type="entry name" value="Kinase-like_dom_sf"/>
</dbReference>
<dbReference type="InterPro" id="IPR000719">
    <property type="entry name" value="Prot_kinase_dom"/>
</dbReference>
<dbReference type="InterPro" id="IPR001245">
    <property type="entry name" value="Ser-Thr/Tyr_kinase_cat_dom"/>
</dbReference>
<dbReference type="InterPro" id="IPR008271">
    <property type="entry name" value="Ser/Thr_kinase_AS"/>
</dbReference>
<dbReference type="InterPro" id="IPR026237">
    <property type="entry name" value="STKINASEGDT"/>
</dbReference>
<dbReference type="PANTHER" id="PTHR47774">
    <property type="entry name" value="GROWTH-DIFFERENTIATION TRANSITION PROTEIN 5-RELATED"/>
    <property type="match status" value="1"/>
</dbReference>
<dbReference type="PANTHER" id="PTHR47774:SF1">
    <property type="entry name" value="GROWTH-DIFFERENTIATION TRANSITION PROTEIN 5-RELATED"/>
    <property type="match status" value="1"/>
</dbReference>
<dbReference type="Pfam" id="PF07714">
    <property type="entry name" value="PK_Tyr_Ser-Thr"/>
    <property type="match status" value="1"/>
</dbReference>
<dbReference type="PRINTS" id="PR02079">
    <property type="entry name" value="STKINASEGDT"/>
</dbReference>
<dbReference type="SMART" id="SM00220">
    <property type="entry name" value="S_TKc"/>
    <property type="match status" value="1"/>
</dbReference>
<dbReference type="SUPFAM" id="SSF56112">
    <property type="entry name" value="Protein kinase-like (PK-like)"/>
    <property type="match status" value="1"/>
</dbReference>
<dbReference type="PROSITE" id="PS50011">
    <property type="entry name" value="PROTEIN_KINASE_DOM"/>
    <property type="match status" value="1"/>
</dbReference>
<dbReference type="PROSITE" id="PS00108">
    <property type="entry name" value="PROTEIN_KINASE_ST"/>
    <property type="match status" value="1"/>
</dbReference>
<accession>Q55DU7</accession>
<keyword id="KW-0067">ATP-binding</keyword>
<keyword id="KW-0418">Kinase</keyword>
<keyword id="KW-0472">Membrane</keyword>
<keyword id="KW-0547">Nucleotide-binding</keyword>
<keyword id="KW-1185">Reference proteome</keyword>
<keyword id="KW-0723">Serine/threonine-protein kinase</keyword>
<keyword id="KW-0732">Signal</keyword>
<keyword id="KW-0808">Transferase</keyword>
<keyword id="KW-0812">Transmembrane</keyword>
<keyword id="KW-1133">Transmembrane helix</keyword>
<gene>
    <name type="primary">gdt4</name>
    <name type="ORF">DDB_G0270550</name>
</gene>